<accession>Q4L4K4</accession>
<name>PGK_STAHJ</name>
<reference key="1">
    <citation type="journal article" date="2005" name="J. Bacteriol.">
        <title>Whole-genome sequencing of Staphylococcus haemolyticus uncovers the extreme plasticity of its genome and the evolution of human-colonizing staphylococcal species.</title>
        <authorList>
            <person name="Takeuchi F."/>
            <person name="Watanabe S."/>
            <person name="Baba T."/>
            <person name="Yuzawa H."/>
            <person name="Ito T."/>
            <person name="Morimoto Y."/>
            <person name="Kuroda M."/>
            <person name="Cui L."/>
            <person name="Takahashi M."/>
            <person name="Ankai A."/>
            <person name="Baba S."/>
            <person name="Fukui S."/>
            <person name="Lee J.C."/>
            <person name="Hiramatsu K."/>
        </authorList>
    </citation>
    <scope>NUCLEOTIDE SEQUENCE [LARGE SCALE GENOMIC DNA]</scope>
    <source>
        <strain>JCSC1435</strain>
    </source>
</reference>
<dbReference type="EC" id="2.7.2.3" evidence="1"/>
<dbReference type="EMBL" id="AP006716">
    <property type="protein sequence ID" value="BAE05421.1"/>
    <property type="molecule type" value="Genomic_DNA"/>
</dbReference>
<dbReference type="RefSeq" id="WP_011276376.1">
    <property type="nucleotide sequence ID" value="NC_007168.1"/>
</dbReference>
<dbReference type="SMR" id="Q4L4K4"/>
<dbReference type="KEGG" id="sha:SH2112"/>
<dbReference type="eggNOG" id="COG0126">
    <property type="taxonomic scope" value="Bacteria"/>
</dbReference>
<dbReference type="HOGENOM" id="CLU_025427_0_2_9"/>
<dbReference type="OrthoDB" id="9808460at2"/>
<dbReference type="UniPathway" id="UPA00109">
    <property type="reaction ID" value="UER00185"/>
</dbReference>
<dbReference type="Proteomes" id="UP000000543">
    <property type="component" value="Chromosome"/>
</dbReference>
<dbReference type="GO" id="GO:0005829">
    <property type="term" value="C:cytosol"/>
    <property type="evidence" value="ECO:0007669"/>
    <property type="project" value="TreeGrafter"/>
</dbReference>
<dbReference type="GO" id="GO:0043531">
    <property type="term" value="F:ADP binding"/>
    <property type="evidence" value="ECO:0007669"/>
    <property type="project" value="TreeGrafter"/>
</dbReference>
<dbReference type="GO" id="GO:0005524">
    <property type="term" value="F:ATP binding"/>
    <property type="evidence" value="ECO:0007669"/>
    <property type="project" value="UniProtKB-KW"/>
</dbReference>
<dbReference type="GO" id="GO:0004618">
    <property type="term" value="F:phosphoglycerate kinase activity"/>
    <property type="evidence" value="ECO:0007669"/>
    <property type="project" value="UniProtKB-UniRule"/>
</dbReference>
<dbReference type="GO" id="GO:0006094">
    <property type="term" value="P:gluconeogenesis"/>
    <property type="evidence" value="ECO:0007669"/>
    <property type="project" value="TreeGrafter"/>
</dbReference>
<dbReference type="GO" id="GO:0006096">
    <property type="term" value="P:glycolytic process"/>
    <property type="evidence" value="ECO:0007669"/>
    <property type="project" value="UniProtKB-UniRule"/>
</dbReference>
<dbReference type="CDD" id="cd00318">
    <property type="entry name" value="Phosphoglycerate_kinase"/>
    <property type="match status" value="1"/>
</dbReference>
<dbReference type="FunFam" id="3.40.50.1260:FF:000001">
    <property type="entry name" value="Phosphoglycerate kinase"/>
    <property type="match status" value="1"/>
</dbReference>
<dbReference type="FunFam" id="3.40.50.1260:FF:000008">
    <property type="entry name" value="Phosphoglycerate kinase"/>
    <property type="match status" value="1"/>
</dbReference>
<dbReference type="Gene3D" id="3.40.50.1260">
    <property type="entry name" value="Phosphoglycerate kinase, N-terminal domain"/>
    <property type="match status" value="2"/>
</dbReference>
<dbReference type="HAMAP" id="MF_00145">
    <property type="entry name" value="Phosphoglyc_kinase"/>
    <property type="match status" value="1"/>
</dbReference>
<dbReference type="InterPro" id="IPR001576">
    <property type="entry name" value="Phosphoglycerate_kinase"/>
</dbReference>
<dbReference type="InterPro" id="IPR015824">
    <property type="entry name" value="Phosphoglycerate_kinase_N"/>
</dbReference>
<dbReference type="InterPro" id="IPR036043">
    <property type="entry name" value="Phosphoglycerate_kinase_sf"/>
</dbReference>
<dbReference type="PANTHER" id="PTHR11406">
    <property type="entry name" value="PHOSPHOGLYCERATE KINASE"/>
    <property type="match status" value="1"/>
</dbReference>
<dbReference type="PANTHER" id="PTHR11406:SF23">
    <property type="entry name" value="PHOSPHOGLYCERATE KINASE 1, CHLOROPLASTIC-RELATED"/>
    <property type="match status" value="1"/>
</dbReference>
<dbReference type="Pfam" id="PF00162">
    <property type="entry name" value="PGK"/>
    <property type="match status" value="1"/>
</dbReference>
<dbReference type="PIRSF" id="PIRSF000724">
    <property type="entry name" value="Pgk"/>
    <property type="match status" value="1"/>
</dbReference>
<dbReference type="PRINTS" id="PR00477">
    <property type="entry name" value="PHGLYCKINASE"/>
</dbReference>
<dbReference type="SUPFAM" id="SSF53748">
    <property type="entry name" value="Phosphoglycerate kinase"/>
    <property type="match status" value="1"/>
</dbReference>
<comment type="catalytic activity">
    <reaction evidence="1">
        <text>(2R)-3-phosphoglycerate + ATP = (2R)-3-phospho-glyceroyl phosphate + ADP</text>
        <dbReference type="Rhea" id="RHEA:14801"/>
        <dbReference type="ChEBI" id="CHEBI:30616"/>
        <dbReference type="ChEBI" id="CHEBI:57604"/>
        <dbReference type="ChEBI" id="CHEBI:58272"/>
        <dbReference type="ChEBI" id="CHEBI:456216"/>
        <dbReference type="EC" id="2.7.2.3"/>
    </reaction>
</comment>
<comment type="pathway">
    <text evidence="1">Carbohydrate degradation; glycolysis; pyruvate from D-glyceraldehyde 3-phosphate: step 2/5.</text>
</comment>
<comment type="subunit">
    <text evidence="1">Monomer.</text>
</comment>
<comment type="subcellular location">
    <subcellularLocation>
        <location evidence="1">Cytoplasm</location>
    </subcellularLocation>
</comment>
<comment type="similarity">
    <text evidence="1">Belongs to the phosphoglycerate kinase family.</text>
</comment>
<sequence>MAKKIVSDLDLKGKVVLERADFNVPLKDGKITNDNRIVQALPTIKYIIEQGGKLVLFSHLGKVKQESDKEGLTLKPVADALSEKLGKEVTFVPETRGKKLESAIKNLSEGDVLLVENTRFEDLDGKKESKNDPELGKYWASLGDVFVNDAFGTAHREHASNVGISTHLETAAGYLMEKEIKFIGGVVNDPHKPVVAILGGAKVSDKIGVIKNLVNIADKILIGGGMAYTFLKAQGKEIGLSLLEEDKIDFAKELLESNGDQIVLPVDAKVAKEFSNDAEITEVSIDNIPSDQEAMDVGPKTVELFSKELEGAHTVVWNGPMGVFEFSNFAQGTIGVCKAIANLKDATTIIGGGDSAAAAISLGFEDDFTHISTGGGASLEYLEGIELPGIKAINDK</sequence>
<feature type="chain" id="PRO_1000009651" description="Phosphoglycerate kinase">
    <location>
        <begin position="1"/>
        <end position="396"/>
    </location>
</feature>
<feature type="binding site" evidence="1">
    <location>
        <begin position="21"/>
        <end position="23"/>
    </location>
    <ligand>
        <name>substrate</name>
    </ligand>
</feature>
<feature type="binding site" evidence="1">
    <location>
        <position position="36"/>
    </location>
    <ligand>
        <name>substrate</name>
    </ligand>
</feature>
<feature type="binding site" evidence="1">
    <location>
        <begin position="59"/>
        <end position="62"/>
    </location>
    <ligand>
        <name>substrate</name>
    </ligand>
</feature>
<feature type="binding site" evidence="1">
    <location>
        <position position="119"/>
    </location>
    <ligand>
        <name>substrate</name>
    </ligand>
</feature>
<feature type="binding site" evidence="1">
    <location>
        <position position="156"/>
    </location>
    <ligand>
        <name>substrate</name>
    </ligand>
</feature>
<feature type="binding site" evidence="1">
    <location>
        <position position="206"/>
    </location>
    <ligand>
        <name>ATP</name>
        <dbReference type="ChEBI" id="CHEBI:30616"/>
    </ligand>
</feature>
<feature type="binding site" evidence="1">
    <location>
        <position position="325"/>
    </location>
    <ligand>
        <name>ATP</name>
        <dbReference type="ChEBI" id="CHEBI:30616"/>
    </ligand>
</feature>
<feature type="binding site" evidence="1">
    <location>
        <begin position="352"/>
        <end position="355"/>
    </location>
    <ligand>
        <name>ATP</name>
        <dbReference type="ChEBI" id="CHEBI:30616"/>
    </ligand>
</feature>
<proteinExistence type="inferred from homology"/>
<gene>
    <name evidence="1" type="primary">pgk</name>
    <name type="ordered locus">SH2112</name>
</gene>
<evidence type="ECO:0000255" key="1">
    <source>
        <dbReference type="HAMAP-Rule" id="MF_00145"/>
    </source>
</evidence>
<protein>
    <recommendedName>
        <fullName evidence="1">Phosphoglycerate kinase</fullName>
        <ecNumber evidence="1">2.7.2.3</ecNumber>
    </recommendedName>
</protein>
<organism>
    <name type="scientific">Staphylococcus haemolyticus (strain JCSC1435)</name>
    <dbReference type="NCBI Taxonomy" id="279808"/>
    <lineage>
        <taxon>Bacteria</taxon>
        <taxon>Bacillati</taxon>
        <taxon>Bacillota</taxon>
        <taxon>Bacilli</taxon>
        <taxon>Bacillales</taxon>
        <taxon>Staphylococcaceae</taxon>
        <taxon>Staphylococcus</taxon>
    </lineage>
</organism>
<keyword id="KW-0067">ATP-binding</keyword>
<keyword id="KW-0963">Cytoplasm</keyword>
<keyword id="KW-0324">Glycolysis</keyword>
<keyword id="KW-0418">Kinase</keyword>
<keyword id="KW-0547">Nucleotide-binding</keyword>
<keyword id="KW-0808">Transferase</keyword>